<gene>
    <name evidence="1" type="primary">serS</name>
    <name type="ordered locus">Sama_1776</name>
</gene>
<dbReference type="EC" id="6.1.1.11" evidence="1"/>
<dbReference type="EMBL" id="CP000507">
    <property type="protein sequence ID" value="ABL99981.1"/>
    <property type="molecule type" value="Genomic_DNA"/>
</dbReference>
<dbReference type="RefSeq" id="WP_011759889.1">
    <property type="nucleotide sequence ID" value="NC_008700.1"/>
</dbReference>
<dbReference type="SMR" id="A1S6H5"/>
<dbReference type="STRING" id="326297.Sama_1776"/>
<dbReference type="KEGG" id="saz:Sama_1776"/>
<dbReference type="eggNOG" id="COG0172">
    <property type="taxonomic scope" value="Bacteria"/>
</dbReference>
<dbReference type="HOGENOM" id="CLU_023797_1_1_6"/>
<dbReference type="OrthoDB" id="9804647at2"/>
<dbReference type="UniPathway" id="UPA00906">
    <property type="reaction ID" value="UER00895"/>
</dbReference>
<dbReference type="Proteomes" id="UP000009175">
    <property type="component" value="Chromosome"/>
</dbReference>
<dbReference type="GO" id="GO:0005737">
    <property type="term" value="C:cytoplasm"/>
    <property type="evidence" value="ECO:0007669"/>
    <property type="project" value="UniProtKB-SubCell"/>
</dbReference>
<dbReference type="GO" id="GO:0005524">
    <property type="term" value="F:ATP binding"/>
    <property type="evidence" value="ECO:0007669"/>
    <property type="project" value="UniProtKB-UniRule"/>
</dbReference>
<dbReference type="GO" id="GO:0004828">
    <property type="term" value="F:serine-tRNA ligase activity"/>
    <property type="evidence" value="ECO:0007669"/>
    <property type="project" value="UniProtKB-UniRule"/>
</dbReference>
<dbReference type="GO" id="GO:0016260">
    <property type="term" value="P:selenocysteine biosynthetic process"/>
    <property type="evidence" value="ECO:0007669"/>
    <property type="project" value="UniProtKB-UniRule"/>
</dbReference>
<dbReference type="GO" id="GO:0006434">
    <property type="term" value="P:seryl-tRNA aminoacylation"/>
    <property type="evidence" value="ECO:0007669"/>
    <property type="project" value="UniProtKB-UniRule"/>
</dbReference>
<dbReference type="CDD" id="cd00770">
    <property type="entry name" value="SerRS_core"/>
    <property type="match status" value="1"/>
</dbReference>
<dbReference type="Gene3D" id="3.30.930.10">
    <property type="entry name" value="Bira Bifunctional Protein, Domain 2"/>
    <property type="match status" value="1"/>
</dbReference>
<dbReference type="Gene3D" id="1.10.287.40">
    <property type="entry name" value="Serine-tRNA synthetase, tRNA binding domain"/>
    <property type="match status" value="1"/>
</dbReference>
<dbReference type="HAMAP" id="MF_00176">
    <property type="entry name" value="Ser_tRNA_synth_type1"/>
    <property type="match status" value="1"/>
</dbReference>
<dbReference type="InterPro" id="IPR002314">
    <property type="entry name" value="aa-tRNA-synt_IIb"/>
</dbReference>
<dbReference type="InterPro" id="IPR006195">
    <property type="entry name" value="aa-tRNA-synth_II"/>
</dbReference>
<dbReference type="InterPro" id="IPR045864">
    <property type="entry name" value="aa-tRNA-synth_II/BPL/LPL"/>
</dbReference>
<dbReference type="InterPro" id="IPR002317">
    <property type="entry name" value="Ser-tRNA-ligase_type_1"/>
</dbReference>
<dbReference type="InterPro" id="IPR015866">
    <property type="entry name" value="Ser-tRNA-synth_1_N"/>
</dbReference>
<dbReference type="InterPro" id="IPR042103">
    <property type="entry name" value="SerRS_1_N_sf"/>
</dbReference>
<dbReference type="InterPro" id="IPR033729">
    <property type="entry name" value="SerRS_core"/>
</dbReference>
<dbReference type="InterPro" id="IPR010978">
    <property type="entry name" value="tRNA-bd_arm"/>
</dbReference>
<dbReference type="NCBIfam" id="TIGR00414">
    <property type="entry name" value="serS"/>
    <property type="match status" value="1"/>
</dbReference>
<dbReference type="PANTHER" id="PTHR43697:SF1">
    <property type="entry name" value="SERINE--TRNA LIGASE"/>
    <property type="match status" value="1"/>
</dbReference>
<dbReference type="PANTHER" id="PTHR43697">
    <property type="entry name" value="SERYL-TRNA SYNTHETASE"/>
    <property type="match status" value="1"/>
</dbReference>
<dbReference type="Pfam" id="PF02403">
    <property type="entry name" value="Seryl_tRNA_N"/>
    <property type="match status" value="1"/>
</dbReference>
<dbReference type="Pfam" id="PF00587">
    <property type="entry name" value="tRNA-synt_2b"/>
    <property type="match status" value="1"/>
</dbReference>
<dbReference type="PIRSF" id="PIRSF001529">
    <property type="entry name" value="Ser-tRNA-synth_IIa"/>
    <property type="match status" value="1"/>
</dbReference>
<dbReference type="PRINTS" id="PR00981">
    <property type="entry name" value="TRNASYNTHSER"/>
</dbReference>
<dbReference type="SUPFAM" id="SSF55681">
    <property type="entry name" value="Class II aaRS and biotin synthetases"/>
    <property type="match status" value="1"/>
</dbReference>
<dbReference type="SUPFAM" id="SSF46589">
    <property type="entry name" value="tRNA-binding arm"/>
    <property type="match status" value="1"/>
</dbReference>
<dbReference type="PROSITE" id="PS50862">
    <property type="entry name" value="AA_TRNA_LIGASE_II"/>
    <property type="match status" value="1"/>
</dbReference>
<sequence>MLDTKYLRNELEFTKERLAARGFALDIDHLKALEEKRKSLQVATEELQASRNAISKSIGQAKSRGEDVAPIMAQVGNLGTELEAKKIELAALLEEINAIAMSVPNLPDESVPVGKDESENVEIRRWGEPRSFDFAVKDHVDLGETLGGLDFKSAVKITGSRFIVMKGQIARMHRALAQFMLDLHTIEHGYTEAYVPLLVNTDSLLGTGQLPKFSEDLFNLKPATEEGQALSLIPTAEVPVTNLVRDTILDEADLPIKITAHTACFRSEAGSYGKDTRGLIRQHQFDKVEMVQIVKPENSMDALEQMVGHAENVLKKLGLPYRTVVLCTGDMGFGAAKTYDIEVWLPAQNTYREISSCSNVKDFQARRMQARYRSKEDNKPALVHTLNGSGLAVGRTLVAILENYQNADGTVTVPEALRPYMGGIEQLG</sequence>
<name>SYS_SHEAM</name>
<organism>
    <name type="scientific">Shewanella amazonensis (strain ATCC BAA-1098 / SB2B)</name>
    <dbReference type="NCBI Taxonomy" id="326297"/>
    <lineage>
        <taxon>Bacteria</taxon>
        <taxon>Pseudomonadati</taxon>
        <taxon>Pseudomonadota</taxon>
        <taxon>Gammaproteobacteria</taxon>
        <taxon>Alteromonadales</taxon>
        <taxon>Shewanellaceae</taxon>
        <taxon>Shewanella</taxon>
    </lineage>
</organism>
<comment type="function">
    <text evidence="1">Catalyzes the attachment of serine to tRNA(Ser). Is also able to aminoacylate tRNA(Sec) with serine, to form the misacylated tRNA L-seryl-tRNA(Sec), which will be further converted into selenocysteinyl-tRNA(Sec).</text>
</comment>
<comment type="catalytic activity">
    <reaction evidence="1">
        <text>tRNA(Ser) + L-serine + ATP = L-seryl-tRNA(Ser) + AMP + diphosphate + H(+)</text>
        <dbReference type="Rhea" id="RHEA:12292"/>
        <dbReference type="Rhea" id="RHEA-COMP:9669"/>
        <dbReference type="Rhea" id="RHEA-COMP:9703"/>
        <dbReference type="ChEBI" id="CHEBI:15378"/>
        <dbReference type="ChEBI" id="CHEBI:30616"/>
        <dbReference type="ChEBI" id="CHEBI:33019"/>
        <dbReference type="ChEBI" id="CHEBI:33384"/>
        <dbReference type="ChEBI" id="CHEBI:78442"/>
        <dbReference type="ChEBI" id="CHEBI:78533"/>
        <dbReference type="ChEBI" id="CHEBI:456215"/>
        <dbReference type="EC" id="6.1.1.11"/>
    </reaction>
</comment>
<comment type="catalytic activity">
    <reaction evidence="1">
        <text>tRNA(Sec) + L-serine + ATP = L-seryl-tRNA(Sec) + AMP + diphosphate + H(+)</text>
        <dbReference type="Rhea" id="RHEA:42580"/>
        <dbReference type="Rhea" id="RHEA-COMP:9742"/>
        <dbReference type="Rhea" id="RHEA-COMP:10128"/>
        <dbReference type="ChEBI" id="CHEBI:15378"/>
        <dbReference type="ChEBI" id="CHEBI:30616"/>
        <dbReference type="ChEBI" id="CHEBI:33019"/>
        <dbReference type="ChEBI" id="CHEBI:33384"/>
        <dbReference type="ChEBI" id="CHEBI:78442"/>
        <dbReference type="ChEBI" id="CHEBI:78533"/>
        <dbReference type="ChEBI" id="CHEBI:456215"/>
        <dbReference type="EC" id="6.1.1.11"/>
    </reaction>
</comment>
<comment type="pathway">
    <text evidence="1">Aminoacyl-tRNA biosynthesis; selenocysteinyl-tRNA(Sec) biosynthesis; L-seryl-tRNA(Sec) from L-serine and tRNA(Sec): step 1/1.</text>
</comment>
<comment type="subunit">
    <text evidence="1">Homodimer. The tRNA molecule binds across the dimer.</text>
</comment>
<comment type="subcellular location">
    <subcellularLocation>
        <location evidence="1">Cytoplasm</location>
    </subcellularLocation>
</comment>
<comment type="domain">
    <text evidence="1">Consists of two distinct domains, a catalytic core and a N-terminal extension that is involved in tRNA binding.</text>
</comment>
<comment type="similarity">
    <text evidence="1">Belongs to the class-II aminoacyl-tRNA synthetase family. Type-1 seryl-tRNA synthetase subfamily.</text>
</comment>
<reference key="1">
    <citation type="submission" date="2006-12" db="EMBL/GenBank/DDBJ databases">
        <title>Complete sequence of Shewanella amazonensis SB2B.</title>
        <authorList>
            <consortium name="US DOE Joint Genome Institute"/>
            <person name="Copeland A."/>
            <person name="Lucas S."/>
            <person name="Lapidus A."/>
            <person name="Barry K."/>
            <person name="Detter J.C."/>
            <person name="Glavina del Rio T."/>
            <person name="Hammon N."/>
            <person name="Israni S."/>
            <person name="Dalin E."/>
            <person name="Tice H."/>
            <person name="Pitluck S."/>
            <person name="Munk A.C."/>
            <person name="Brettin T."/>
            <person name="Bruce D."/>
            <person name="Han C."/>
            <person name="Tapia R."/>
            <person name="Gilna P."/>
            <person name="Schmutz J."/>
            <person name="Larimer F."/>
            <person name="Land M."/>
            <person name="Hauser L."/>
            <person name="Kyrpides N."/>
            <person name="Mikhailova N."/>
            <person name="Fredrickson J."/>
            <person name="Richardson P."/>
        </authorList>
    </citation>
    <scope>NUCLEOTIDE SEQUENCE [LARGE SCALE GENOMIC DNA]</scope>
    <source>
        <strain>ATCC BAA-1098 / SB2B</strain>
    </source>
</reference>
<protein>
    <recommendedName>
        <fullName evidence="1">Serine--tRNA ligase</fullName>
        <ecNumber evidence="1">6.1.1.11</ecNumber>
    </recommendedName>
    <alternativeName>
        <fullName evidence="1">Seryl-tRNA synthetase</fullName>
        <shortName evidence="1">SerRS</shortName>
    </alternativeName>
    <alternativeName>
        <fullName evidence="1">Seryl-tRNA(Ser/Sec) synthetase</fullName>
    </alternativeName>
</protein>
<keyword id="KW-0030">Aminoacyl-tRNA synthetase</keyword>
<keyword id="KW-0067">ATP-binding</keyword>
<keyword id="KW-0963">Cytoplasm</keyword>
<keyword id="KW-0436">Ligase</keyword>
<keyword id="KW-0547">Nucleotide-binding</keyword>
<keyword id="KW-0648">Protein biosynthesis</keyword>
<keyword id="KW-1185">Reference proteome</keyword>
<evidence type="ECO:0000255" key="1">
    <source>
        <dbReference type="HAMAP-Rule" id="MF_00176"/>
    </source>
</evidence>
<accession>A1S6H5</accession>
<feature type="chain" id="PRO_1000019808" description="Serine--tRNA ligase">
    <location>
        <begin position="1"/>
        <end position="428"/>
    </location>
</feature>
<feature type="binding site" evidence="1">
    <location>
        <begin position="235"/>
        <end position="237"/>
    </location>
    <ligand>
        <name>L-serine</name>
        <dbReference type="ChEBI" id="CHEBI:33384"/>
    </ligand>
</feature>
<feature type="binding site" evidence="1">
    <location>
        <begin position="266"/>
        <end position="268"/>
    </location>
    <ligand>
        <name>ATP</name>
        <dbReference type="ChEBI" id="CHEBI:30616"/>
    </ligand>
</feature>
<feature type="binding site" evidence="1">
    <location>
        <position position="289"/>
    </location>
    <ligand>
        <name>L-serine</name>
        <dbReference type="ChEBI" id="CHEBI:33384"/>
    </ligand>
</feature>
<feature type="binding site" evidence="1">
    <location>
        <begin position="353"/>
        <end position="356"/>
    </location>
    <ligand>
        <name>ATP</name>
        <dbReference type="ChEBI" id="CHEBI:30616"/>
    </ligand>
</feature>
<feature type="binding site" evidence="1">
    <location>
        <position position="389"/>
    </location>
    <ligand>
        <name>L-serine</name>
        <dbReference type="ChEBI" id="CHEBI:33384"/>
    </ligand>
</feature>
<proteinExistence type="inferred from homology"/>